<name>GET1_YEAS6</name>
<evidence type="ECO:0000255" key="1">
    <source>
        <dbReference type="HAMAP-Rule" id="MF_03113"/>
    </source>
</evidence>
<reference key="1">
    <citation type="journal article" date="2008" name="FEMS Yeast Res.">
        <title>Comparative genome analysis of a Saccharomyces cerevisiae wine strain.</title>
        <authorList>
            <person name="Borneman A.R."/>
            <person name="Forgan A.H."/>
            <person name="Pretorius I.S."/>
            <person name="Chambers P.J."/>
        </authorList>
    </citation>
    <scope>NUCLEOTIDE SEQUENCE [LARGE SCALE GENOMIC DNA]</scope>
    <source>
        <strain>AWRI1631</strain>
    </source>
</reference>
<proteinExistence type="inferred from homology"/>
<organism>
    <name type="scientific">Saccharomyces cerevisiae (strain AWRI1631)</name>
    <name type="common">Baker's yeast</name>
    <dbReference type="NCBI Taxonomy" id="545124"/>
    <lineage>
        <taxon>Eukaryota</taxon>
        <taxon>Fungi</taxon>
        <taxon>Dikarya</taxon>
        <taxon>Ascomycota</taxon>
        <taxon>Saccharomycotina</taxon>
        <taxon>Saccharomycetes</taxon>
        <taxon>Saccharomycetales</taxon>
        <taxon>Saccharomycetaceae</taxon>
        <taxon>Saccharomyces</taxon>
    </lineage>
</organism>
<dbReference type="EMBL" id="ABSV01000903">
    <property type="protein sequence ID" value="EDZ72152.1"/>
    <property type="molecule type" value="Genomic_DNA"/>
</dbReference>
<dbReference type="SMR" id="B5VIU1"/>
<dbReference type="Proteomes" id="UP000008988">
    <property type="component" value="Unassembled WGS sequence"/>
</dbReference>
<dbReference type="GO" id="GO:0005789">
    <property type="term" value="C:endoplasmic reticulum membrane"/>
    <property type="evidence" value="ECO:0007669"/>
    <property type="project" value="UniProtKB-SubCell"/>
</dbReference>
<dbReference type="GO" id="GO:0043529">
    <property type="term" value="C:GET complex"/>
    <property type="evidence" value="ECO:0007669"/>
    <property type="project" value="UniProtKB-UniRule"/>
</dbReference>
<dbReference type="GO" id="GO:0000139">
    <property type="term" value="C:Golgi membrane"/>
    <property type="evidence" value="ECO:0007669"/>
    <property type="project" value="UniProtKB-SubCell"/>
</dbReference>
<dbReference type="GO" id="GO:0043495">
    <property type="term" value="F:protein-membrane adaptor activity"/>
    <property type="evidence" value="ECO:0007669"/>
    <property type="project" value="TreeGrafter"/>
</dbReference>
<dbReference type="GO" id="GO:0071816">
    <property type="term" value="P:tail-anchored membrane protein insertion into ER membrane"/>
    <property type="evidence" value="ECO:0007669"/>
    <property type="project" value="InterPro"/>
</dbReference>
<dbReference type="GO" id="GO:0016192">
    <property type="term" value="P:vesicle-mediated transport"/>
    <property type="evidence" value="ECO:0007669"/>
    <property type="project" value="UniProtKB-KW"/>
</dbReference>
<dbReference type="Gene3D" id="1.10.287.660">
    <property type="entry name" value="Helix hairpin bin"/>
    <property type="match status" value="1"/>
</dbReference>
<dbReference type="HAMAP" id="MF_03113">
    <property type="entry name" value="Get1"/>
    <property type="match status" value="1"/>
</dbReference>
<dbReference type="InterPro" id="IPR028945">
    <property type="entry name" value="Get1"/>
</dbReference>
<dbReference type="InterPro" id="IPR027538">
    <property type="entry name" value="Get1_fungi"/>
</dbReference>
<dbReference type="InterPro" id="IPR029012">
    <property type="entry name" value="Helix_hairpin_bin_sf"/>
</dbReference>
<dbReference type="PANTHER" id="PTHR42650:SF1">
    <property type="entry name" value="GUIDED ENTRY OF TAIL-ANCHORED PROTEINS FACTOR 1"/>
    <property type="match status" value="1"/>
</dbReference>
<dbReference type="PANTHER" id="PTHR42650">
    <property type="entry name" value="TAIL-ANCHORED PROTEIN INSERTION RECEPTOR WRB"/>
    <property type="match status" value="1"/>
</dbReference>
<dbReference type="Pfam" id="PF04420">
    <property type="entry name" value="CHD5"/>
    <property type="match status" value="1"/>
</dbReference>
<comment type="function">
    <text evidence="1">Required for the post-translational delivery of tail-anchored (TA) proteins to the endoplasmic reticulum. Together with GET2, acts as a membrane receptor for soluble GET3, which recognizes and selectively binds the transmembrane domain of TA proteins in the cytosol. The GET complex cooperates with the HDEL receptor ERD2 to mediate the ATP-dependent retrieval of resident ER proteins that contain a C-terminal H-D-E-L retention signal from the Golgi to the ER.</text>
</comment>
<comment type="subunit">
    <text evidence="1">Component of the Golgi to ER traffic (GET) complex, which is composed of GET1, GET2 and GET3. Within the complex, GET1 and GET2 form a heterotetramer which is stabilized by phosphatidylinositol binding and which binds to the GET3 homodimer.</text>
</comment>
<comment type="subcellular location">
    <subcellularLocation>
        <location evidence="1">Endoplasmic reticulum membrane</location>
        <topology evidence="1">Multi-pass membrane protein</topology>
    </subcellularLocation>
    <subcellularLocation>
        <location evidence="1">Golgi apparatus membrane</location>
        <topology evidence="1">Multi-pass membrane protein</topology>
    </subcellularLocation>
</comment>
<comment type="similarity">
    <text evidence="1">Belongs to the WRB/GET1 family.</text>
</comment>
<gene>
    <name evidence="1" type="primary">GET1</name>
    <name type="ORF">AWRI1631_72180</name>
</gene>
<keyword id="KW-0175">Coiled coil</keyword>
<keyword id="KW-0256">Endoplasmic reticulum</keyword>
<keyword id="KW-0931">ER-Golgi transport</keyword>
<keyword id="KW-0333">Golgi apparatus</keyword>
<keyword id="KW-0472">Membrane</keyword>
<keyword id="KW-0812">Transmembrane</keyword>
<keyword id="KW-1133">Transmembrane helix</keyword>
<keyword id="KW-0813">Transport</keyword>
<protein>
    <recommendedName>
        <fullName evidence="1">Golgi to ER traffic protein 1</fullName>
    </recommendedName>
    <alternativeName>
        <fullName evidence="1">Guided entry of tail-anchored proteins 1</fullName>
    </alternativeName>
</protein>
<feature type="chain" id="PRO_0000388614" description="Golgi to ER traffic protein 1">
    <location>
        <begin position="1"/>
        <end position="235"/>
    </location>
</feature>
<feature type="topological domain" description="Lumenal" evidence="1">
    <location>
        <position position="1"/>
    </location>
</feature>
<feature type="transmembrane region" description="Helical" evidence="1">
    <location>
        <begin position="2"/>
        <end position="21"/>
    </location>
</feature>
<feature type="topological domain" description="Cytoplasmic" evidence="1">
    <location>
        <begin position="22"/>
        <end position="104"/>
    </location>
</feature>
<feature type="transmembrane region" description="Helical" evidence="1">
    <location>
        <begin position="105"/>
        <end position="125"/>
    </location>
</feature>
<feature type="topological domain" description="Lumenal" evidence="1">
    <location>
        <begin position="126"/>
        <end position="181"/>
    </location>
</feature>
<feature type="transmembrane region" description="Helical" evidence="1">
    <location>
        <begin position="182"/>
        <end position="198"/>
    </location>
</feature>
<feature type="topological domain" description="Cytoplasmic" evidence="1">
    <location>
        <begin position="199"/>
        <end position="235"/>
    </location>
</feature>
<feature type="coiled-coil region" evidence="1">
    <location>
        <begin position="68"/>
        <end position="104"/>
    </location>
</feature>
<sequence>MHWAAAVAIFFIVVTKFLQYTNKYHEKWISKFAPGNELSKKYLAKVKERHELKEFNNSISAQDNYAKWTKNNRKLDSLDKEINNLKDEIQSENKAFQAHLHKLRLLALTVPFFVFKIMYGKTPVYKLSSSTSTLFPTFVSGVWSQGWLYVLLHPLRTISQKWHIMEGKFGASKFDDMALQSVSLGIWVWALMNVINGVEFIVKQLFLTPKMEAPASVETQEEKALDAVDDAIILD</sequence>
<accession>B5VIU1</accession>